<name>SCNM1_HUMAN</name>
<sequence>MSFKREGDDWSQLNVLKKRRVGDLLASYIPEDEALMLRDGRFACAICPHRPVLDTLAMLTAHRAGKKHLSSLQLFYGKKQPGKERKQNPKHQNELRREETKAEAPLLTQTRLITQSALHRAPHYNSCCRRKYRPEAPGPSVSLSPMPPSEVKLQSGKISREPEPAAGPQAEESATVSAPAPMSPTRRRALDHYLTLRSSGWIPDGRGRWVKDENVEFDSDEEEPPDLPLD</sequence>
<feature type="chain" id="PRO_0000259635" description="Sodium channel modifier 1">
    <location>
        <begin position="1"/>
        <end position="230"/>
    </location>
</feature>
<feature type="zinc finger region" description="Matrin-type">
    <location>
        <begin position="42"/>
        <end position="74"/>
    </location>
</feature>
<feature type="region of interest" description="Disordered" evidence="4">
    <location>
        <begin position="76"/>
        <end position="106"/>
    </location>
</feature>
<feature type="region of interest" description="Disordered" evidence="4">
    <location>
        <begin position="129"/>
        <end position="186"/>
    </location>
</feature>
<feature type="region of interest" description="Required for interaction with LUC7L2" evidence="1">
    <location>
        <begin position="188"/>
        <end position="230"/>
    </location>
</feature>
<feature type="region of interest" description="Disordered" evidence="4">
    <location>
        <begin position="200"/>
        <end position="230"/>
    </location>
</feature>
<feature type="short sequence motif" description="Bipartite nuclear localization signal" evidence="3">
    <location>
        <begin position="4"/>
        <end position="20"/>
    </location>
</feature>
<feature type="compositionally biased region" description="Basic and acidic residues" evidence="4">
    <location>
        <begin position="81"/>
        <end position="102"/>
    </location>
</feature>
<feature type="compositionally biased region" description="Low complexity" evidence="4">
    <location>
        <begin position="164"/>
        <end position="174"/>
    </location>
</feature>
<feature type="compositionally biased region" description="Basic and acidic residues" evidence="4">
    <location>
        <begin position="205"/>
        <end position="214"/>
    </location>
</feature>
<feature type="compositionally biased region" description="Acidic residues" evidence="4">
    <location>
        <begin position="215"/>
        <end position="230"/>
    </location>
</feature>
<feature type="modified residue" description="Phosphoserine" evidence="13">
    <location>
        <position position="2"/>
    </location>
</feature>
<feature type="modified residue" description="Phosphoserine" evidence="11">
    <location>
        <position position="144"/>
    </location>
</feature>
<feature type="modified residue" description="Phosphoserine" evidence="2">
    <location>
        <position position="183"/>
    </location>
</feature>
<feature type="modified residue" description="Phosphoserine" evidence="12">
    <location>
        <position position="219"/>
    </location>
</feature>
<feature type="cross-link" description="Glycyl lysine isopeptide (Lys-Gly) (interchain with G-Cter in SUMO2)" evidence="14">
    <location>
        <position position="67"/>
    </location>
</feature>
<feature type="splice variant" id="VSP_021489" description="In isoform 2." evidence="9">
    <location>
        <begin position="2"/>
        <end position="36"/>
    </location>
</feature>
<feature type="splice variant" id="VSP_053982" description="In isoform 3." evidence="8">
    <original>PEAPGPSVSLSPMPPSEVKLQSGKISREP</original>
    <variation>YGTGKPEVGRLRRRQMALKEFSSVYSEEY</variation>
    <location>
        <begin position="134"/>
        <end position="162"/>
    </location>
</feature>
<feature type="splice variant" id="VSP_053983" description="In isoform 3." evidence="8">
    <location>
        <begin position="163"/>
        <end position="230"/>
    </location>
</feature>
<feature type="sequence variant" id="VAR_087730" description="In OFD19; the genetic variation producing this missense variant predominantly affects splicing and the resulting mRNA is predicted to undergo nonsense-mediated mRNA decay." evidence="7">
    <original>P</original>
    <variation>Q</variation>
    <location>
        <position position="51"/>
    </location>
</feature>
<feature type="helix" evidence="15">
    <location>
        <begin position="10"/>
        <end position="26"/>
    </location>
</feature>
<feature type="turn" evidence="15">
    <location>
        <begin position="31"/>
        <end position="33"/>
    </location>
</feature>
<feature type="strand" evidence="15">
    <location>
        <begin position="34"/>
        <end position="36"/>
    </location>
</feature>
<feature type="strand" evidence="15">
    <location>
        <begin position="42"/>
        <end position="47"/>
    </location>
</feature>
<feature type="strand" evidence="15">
    <location>
        <begin position="52"/>
        <end position="55"/>
    </location>
</feature>
<feature type="helix" evidence="15">
    <location>
        <begin position="56"/>
        <end position="63"/>
    </location>
</feature>
<feature type="helix" evidence="15">
    <location>
        <begin position="66"/>
        <end position="73"/>
    </location>
</feature>
<feature type="helix" evidence="15">
    <location>
        <begin position="184"/>
        <end position="198"/>
    </location>
</feature>
<feature type="strand" evidence="15">
    <location>
        <begin position="205"/>
        <end position="208"/>
    </location>
</feature>
<feature type="strand" evidence="15">
    <location>
        <begin position="213"/>
        <end position="215"/>
    </location>
</feature>
<protein>
    <recommendedName>
        <fullName>Sodium channel modifier 1</fullName>
    </recommendedName>
</protein>
<gene>
    <name type="primary">SCNM1</name>
</gene>
<dbReference type="EMBL" id="AK056322">
    <property type="protein sequence ID" value="BAB71149.1"/>
    <property type="molecule type" value="mRNA"/>
</dbReference>
<dbReference type="EMBL" id="AK301644">
    <property type="protein sequence ID" value="BAG63123.1"/>
    <property type="molecule type" value="mRNA"/>
</dbReference>
<dbReference type="EMBL" id="AL592424">
    <property type="status" value="NOT_ANNOTATED_CDS"/>
    <property type="molecule type" value="Genomic_DNA"/>
</dbReference>
<dbReference type="EMBL" id="BC000264">
    <property type="protein sequence ID" value="AAH00264.1"/>
    <property type="molecule type" value="mRNA"/>
</dbReference>
<dbReference type="CCDS" id="CCDS987.1">
    <molecule id="Q9BWG6-1"/>
</dbReference>
<dbReference type="RefSeq" id="NP_001191777.1">
    <molecule id="Q9BWG6-2"/>
    <property type="nucleotide sequence ID" value="NM_001204848.1"/>
</dbReference>
<dbReference type="RefSeq" id="NP_001191785.1">
    <molecule id="Q9BWG6-2"/>
    <property type="nucleotide sequence ID" value="NM_001204856.2"/>
</dbReference>
<dbReference type="RefSeq" id="NP_076946.1">
    <molecule id="Q9BWG6-1"/>
    <property type="nucleotide sequence ID" value="NM_024041.4"/>
</dbReference>
<dbReference type="PDB" id="7DVQ">
    <property type="method" value="EM"/>
    <property type="resolution" value="2.89 A"/>
    <property type="chains" value="v=1-230"/>
</dbReference>
<dbReference type="PDB" id="8Y7E">
    <property type="method" value="EM"/>
    <property type="resolution" value="4.66 A"/>
    <property type="chains" value="v=1-230"/>
</dbReference>
<dbReference type="PDBsum" id="7DVQ"/>
<dbReference type="PDBsum" id="8Y7E"/>
<dbReference type="EMDB" id="EMD-30875"/>
<dbReference type="EMDB" id="EMD-39013"/>
<dbReference type="SMR" id="Q9BWG6"/>
<dbReference type="BioGRID" id="122476">
    <property type="interactions" value="201"/>
</dbReference>
<dbReference type="BioGRID" id="1529623">
    <property type="interactions" value="1"/>
</dbReference>
<dbReference type="FunCoup" id="Q9BWG6">
    <property type="interactions" value="2243"/>
</dbReference>
<dbReference type="IntAct" id="Q9BWG6">
    <property type="interactions" value="193"/>
</dbReference>
<dbReference type="MINT" id="Q9BWG6"/>
<dbReference type="STRING" id="9606.ENSP00000357901"/>
<dbReference type="iPTMnet" id="Q9BWG6"/>
<dbReference type="PhosphoSitePlus" id="Q9BWG6"/>
<dbReference type="BioMuta" id="SCNM1"/>
<dbReference type="DMDM" id="74752399"/>
<dbReference type="jPOST" id="Q9BWG6"/>
<dbReference type="MassIVE" id="Q9BWG6"/>
<dbReference type="PaxDb" id="9606-ENSP00000357901"/>
<dbReference type="PeptideAtlas" id="Q9BWG6"/>
<dbReference type="ProteomicsDB" id="79276">
    <molecule id="Q9BWG6-1"/>
</dbReference>
<dbReference type="ProteomicsDB" id="79277">
    <molecule id="Q9BWG6-2"/>
</dbReference>
<dbReference type="Pumba" id="Q9BWG6"/>
<dbReference type="Antibodypedia" id="34055">
    <property type="antibodies" value="98 antibodies from 27 providers"/>
</dbReference>
<dbReference type="DNASU" id="79005"/>
<dbReference type="Ensembl" id="ENST00000368902.1">
    <molecule id="Q9BWG6-2"/>
    <property type="protein sequence ID" value="ENSP00000357898.1"/>
    <property type="gene ID" value="ENSG00000163156.12"/>
</dbReference>
<dbReference type="Ensembl" id="ENST00000368905.9">
    <molecule id="Q9BWG6-1"/>
    <property type="protein sequence ID" value="ENSP00000357901.4"/>
    <property type="gene ID" value="ENSG00000163156.12"/>
</dbReference>
<dbReference type="Ensembl" id="ENST00000602841.5">
    <molecule id="Q9BWG6-2"/>
    <property type="protein sequence ID" value="ENSP00000473282.1"/>
    <property type="gene ID" value="ENSG00000163156.12"/>
</dbReference>
<dbReference type="GeneID" id="100534012"/>
<dbReference type="GeneID" id="79005"/>
<dbReference type="KEGG" id="hsa:100534012"/>
<dbReference type="KEGG" id="hsa:79005"/>
<dbReference type="MANE-Select" id="ENST00000368905.9">
    <property type="protein sequence ID" value="ENSP00000357901.4"/>
    <property type="RefSeq nucleotide sequence ID" value="NM_024041.4"/>
    <property type="RefSeq protein sequence ID" value="NP_076946.1"/>
</dbReference>
<dbReference type="UCSC" id="uc001ewz.4">
    <molecule id="Q9BWG6-1"/>
    <property type="organism name" value="human"/>
</dbReference>
<dbReference type="AGR" id="HGNC:23136"/>
<dbReference type="CTD" id="100534012"/>
<dbReference type="CTD" id="79005"/>
<dbReference type="DisGeNET" id="79005"/>
<dbReference type="GeneCards" id="SCNM1"/>
<dbReference type="HGNC" id="HGNC:23136">
    <property type="gene designation" value="SCNM1"/>
</dbReference>
<dbReference type="HPA" id="ENSG00000163156">
    <property type="expression patterns" value="Low tissue specificity"/>
</dbReference>
<dbReference type="MalaCards" id="SCNM1"/>
<dbReference type="MIM" id="608095">
    <property type="type" value="gene"/>
</dbReference>
<dbReference type="MIM" id="620107">
    <property type="type" value="phenotype"/>
</dbReference>
<dbReference type="neXtProt" id="NX_Q9BWG6"/>
<dbReference type="OpenTargets" id="ENSG00000163156"/>
<dbReference type="PharmGKB" id="PA134958437"/>
<dbReference type="VEuPathDB" id="HostDB:ENSG00000163156"/>
<dbReference type="eggNOG" id="ENOG502QWNV">
    <property type="taxonomic scope" value="Eukaryota"/>
</dbReference>
<dbReference type="GeneTree" id="ENSGT00390000010811"/>
<dbReference type="HOGENOM" id="CLU_059812_0_0_1"/>
<dbReference type="InParanoid" id="Q9BWG6"/>
<dbReference type="OMA" id="NGKYACT"/>
<dbReference type="OrthoDB" id="1924550at2759"/>
<dbReference type="PAN-GO" id="Q9BWG6">
    <property type="GO annotations" value="2 GO annotations based on evolutionary models"/>
</dbReference>
<dbReference type="PhylomeDB" id="Q9BWG6"/>
<dbReference type="TreeFam" id="TF332168"/>
<dbReference type="PathwayCommons" id="Q9BWG6"/>
<dbReference type="SignaLink" id="Q9BWG6"/>
<dbReference type="BioGRID-ORCS" id="100534012">
    <property type="hits" value="11 hits in 196 CRISPR screens"/>
</dbReference>
<dbReference type="BioGRID-ORCS" id="79005">
    <property type="hits" value="133 hits in 1157 CRISPR screens"/>
</dbReference>
<dbReference type="CD-CODE" id="804901D1">
    <property type="entry name" value="Nuclear speckle"/>
</dbReference>
<dbReference type="ChiTaRS" id="SCNM1">
    <property type="organism name" value="human"/>
</dbReference>
<dbReference type="Pharos" id="Q9BWG6">
    <property type="development level" value="Tbio"/>
</dbReference>
<dbReference type="PRO" id="PR:Q9BWG6"/>
<dbReference type="Proteomes" id="UP000005640">
    <property type="component" value="Chromosome 1"/>
</dbReference>
<dbReference type="RNAct" id="Q9BWG6">
    <property type="molecule type" value="protein"/>
</dbReference>
<dbReference type="Bgee" id="ENSG00000163156">
    <property type="expression patterns" value="Expressed in granulocyte and 193 other cell types or tissues"/>
</dbReference>
<dbReference type="GO" id="GO:0016607">
    <property type="term" value="C:nuclear speck"/>
    <property type="evidence" value="ECO:0000250"/>
    <property type="project" value="UniProtKB"/>
</dbReference>
<dbReference type="GO" id="GO:0005634">
    <property type="term" value="C:nucleus"/>
    <property type="evidence" value="ECO:0000318"/>
    <property type="project" value="GO_Central"/>
</dbReference>
<dbReference type="GO" id="GO:0005681">
    <property type="term" value="C:spliceosomal complex"/>
    <property type="evidence" value="ECO:0007669"/>
    <property type="project" value="UniProtKB-KW"/>
</dbReference>
<dbReference type="GO" id="GO:0019899">
    <property type="term" value="F:enzyme binding"/>
    <property type="evidence" value="ECO:0000353"/>
    <property type="project" value="UniProtKB"/>
</dbReference>
<dbReference type="GO" id="GO:0008270">
    <property type="term" value="F:zinc ion binding"/>
    <property type="evidence" value="ECO:0007669"/>
    <property type="project" value="UniProtKB-KW"/>
</dbReference>
<dbReference type="GO" id="GO:0000380">
    <property type="term" value="P:alternative mRNA splicing, via spliceosome"/>
    <property type="evidence" value="ECO:0000250"/>
    <property type="project" value="UniProtKB"/>
</dbReference>
<dbReference type="GO" id="GO:0008380">
    <property type="term" value="P:RNA splicing"/>
    <property type="evidence" value="ECO:0000318"/>
    <property type="project" value="GO_Central"/>
</dbReference>
<dbReference type="InterPro" id="IPR033570">
    <property type="entry name" value="SCNM1"/>
</dbReference>
<dbReference type="InterPro" id="IPR031625">
    <property type="entry name" value="SCNM1_acidic"/>
</dbReference>
<dbReference type="InterPro" id="IPR031622">
    <property type="entry name" value="Znf-SCNM1"/>
</dbReference>
<dbReference type="PANTHER" id="PTHR32297">
    <property type="entry name" value="SODIUM CHANNEL MODIFIER 1"/>
    <property type="match status" value="1"/>
</dbReference>
<dbReference type="PANTHER" id="PTHR32297:SF1">
    <property type="entry name" value="SODIUM CHANNEL MODIFIER 1"/>
    <property type="match status" value="1"/>
</dbReference>
<dbReference type="Pfam" id="PF15805">
    <property type="entry name" value="SCNM1_acidic"/>
    <property type="match status" value="1"/>
</dbReference>
<dbReference type="Pfam" id="PF15803">
    <property type="entry name" value="zf-SCNM1"/>
    <property type="match status" value="1"/>
</dbReference>
<reference key="1">
    <citation type="journal article" date="2004" name="Nat. Genet.">
        <title>Complete sequencing and characterization of 21,243 full-length human cDNAs.</title>
        <authorList>
            <person name="Ota T."/>
            <person name="Suzuki Y."/>
            <person name="Nishikawa T."/>
            <person name="Otsuki T."/>
            <person name="Sugiyama T."/>
            <person name="Irie R."/>
            <person name="Wakamatsu A."/>
            <person name="Hayashi K."/>
            <person name="Sato H."/>
            <person name="Nagai K."/>
            <person name="Kimura K."/>
            <person name="Makita H."/>
            <person name="Sekine M."/>
            <person name="Obayashi M."/>
            <person name="Nishi T."/>
            <person name="Shibahara T."/>
            <person name="Tanaka T."/>
            <person name="Ishii S."/>
            <person name="Yamamoto J."/>
            <person name="Saito K."/>
            <person name="Kawai Y."/>
            <person name="Isono Y."/>
            <person name="Nakamura Y."/>
            <person name="Nagahari K."/>
            <person name="Murakami K."/>
            <person name="Yasuda T."/>
            <person name="Iwayanagi T."/>
            <person name="Wagatsuma M."/>
            <person name="Shiratori A."/>
            <person name="Sudo H."/>
            <person name="Hosoiri T."/>
            <person name="Kaku Y."/>
            <person name="Kodaira H."/>
            <person name="Kondo H."/>
            <person name="Sugawara M."/>
            <person name="Takahashi M."/>
            <person name="Kanda K."/>
            <person name="Yokoi T."/>
            <person name="Furuya T."/>
            <person name="Kikkawa E."/>
            <person name="Omura Y."/>
            <person name="Abe K."/>
            <person name="Kamihara K."/>
            <person name="Katsuta N."/>
            <person name="Sato K."/>
            <person name="Tanikawa M."/>
            <person name="Yamazaki M."/>
            <person name="Ninomiya K."/>
            <person name="Ishibashi T."/>
            <person name="Yamashita H."/>
            <person name="Murakawa K."/>
            <person name="Fujimori K."/>
            <person name="Tanai H."/>
            <person name="Kimata M."/>
            <person name="Watanabe M."/>
            <person name="Hiraoka S."/>
            <person name="Chiba Y."/>
            <person name="Ishida S."/>
            <person name="Ono Y."/>
            <person name="Takiguchi S."/>
            <person name="Watanabe S."/>
            <person name="Yosida M."/>
            <person name="Hotuta T."/>
            <person name="Kusano J."/>
            <person name="Kanehori K."/>
            <person name="Takahashi-Fujii A."/>
            <person name="Hara H."/>
            <person name="Tanase T.-O."/>
            <person name="Nomura Y."/>
            <person name="Togiya S."/>
            <person name="Komai F."/>
            <person name="Hara R."/>
            <person name="Takeuchi K."/>
            <person name="Arita M."/>
            <person name="Imose N."/>
            <person name="Musashino K."/>
            <person name="Yuuki H."/>
            <person name="Oshima A."/>
            <person name="Sasaki N."/>
            <person name="Aotsuka S."/>
            <person name="Yoshikawa Y."/>
            <person name="Matsunawa H."/>
            <person name="Ichihara T."/>
            <person name="Shiohata N."/>
            <person name="Sano S."/>
            <person name="Moriya S."/>
            <person name="Momiyama H."/>
            <person name="Satoh N."/>
            <person name="Takami S."/>
            <person name="Terashima Y."/>
            <person name="Suzuki O."/>
            <person name="Nakagawa S."/>
            <person name="Senoh A."/>
            <person name="Mizoguchi H."/>
            <person name="Goto Y."/>
            <person name="Shimizu F."/>
            <person name="Wakebe H."/>
            <person name="Hishigaki H."/>
            <person name="Watanabe T."/>
            <person name="Sugiyama A."/>
            <person name="Takemoto M."/>
            <person name="Kawakami B."/>
            <person name="Yamazaki M."/>
            <person name="Watanabe K."/>
            <person name="Kumagai A."/>
            <person name="Itakura S."/>
            <person name="Fukuzumi Y."/>
            <person name="Fujimori Y."/>
            <person name="Komiyama M."/>
            <person name="Tashiro H."/>
            <person name="Tanigami A."/>
            <person name="Fujiwara T."/>
            <person name="Ono T."/>
            <person name="Yamada K."/>
            <person name="Fujii Y."/>
            <person name="Ozaki K."/>
            <person name="Hirao M."/>
            <person name="Ohmori Y."/>
            <person name="Kawabata A."/>
            <person name="Hikiji T."/>
            <person name="Kobatake N."/>
            <person name="Inagaki H."/>
            <person name="Ikema Y."/>
            <person name="Okamoto S."/>
            <person name="Okitani R."/>
            <person name="Kawakami T."/>
            <person name="Noguchi S."/>
            <person name="Itoh T."/>
            <person name="Shigeta K."/>
            <person name="Senba T."/>
            <person name="Matsumura K."/>
            <person name="Nakajima Y."/>
            <person name="Mizuno T."/>
            <person name="Morinaga M."/>
            <person name="Sasaki M."/>
            <person name="Togashi T."/>
            <person name="Oyama M."/>
            <person name="Hata H."/>
            <person name="Watanabe M."/>
            <person name="Komatsu T."/>
            <person name="Mizushima-Sugano J."/>
            <person name="Satoh T."/>
            <person name="Shirai Y."/>
            <person name="Takahashi Y."/>
            <person name="Nakagawa K."/>
            <person name="Okumura K."/>
            <person name="Nagase T."/>
            <person name="Nomura N."/>
            <person name="Kikuchi H."/>
            <person name="Masuho Y."/>
            <person name="Yamashita R."/>
            <person name="Nakai K."/>
            <person name="Yada T."/>
            <person name="Nakamura Y."/>
            <person name="Ohara O."/>
            <person name="Isogai T."/>
            <person name="Sugano S."/>
        </authorList>
    </citation>
    <scope>NUCLEOTIDE SEQUENCE [LARGE SCALE MRNA] (ISOFORMS 1 AND 3)</scope>
    <source>
        <tissue>Esophagus</tissue>
    </source>
</reference>
<reference key="2">
    <citation type="journal article" date="2006" name="Nature">
        <title>The DNA sequence and biological annotation of human chromosome 1.</title>
        <authorList>
            <person name="Gregory S.G."/>
            <person name="Barlow K.F."/>
            <person name="McLay K.E."/>
            <person name="Kaul R."/>
            <person name="Swarbreck D."/>
            <person name="Dunham A."/>
            <person name="Scott C.E."/>
            <person name="Howe K.L."/>
            <person name="Woodfine K."/>
            <person name="Spencer C.C.A."/>
            <person name="Jones M.C."/>
            <person name="Gillson C."/>
            <person name="Searle S."/>
            <person name="Zhou Y."/>
            <person name="Kokocinski F."/>
            <person name="McDonald L."/>
            <person name="Evans R."/>
            <person name="Phillips K."/>
            <person name="Atkinson A."/>
            <person name="Cooper R."/>
            <person name="Jones C."/>
            <person name="Hall R.E."/>
            <person name="Andrews T.D."/>
            <person name="Lloyd C."/>
            <person name="Ainscough R."/>
            <person name="Almeida J.P."/>
            <person name="Ambrose K.D."/>
            <person name="Anderson F."/>
            <person name="Andrew R.W."/>
            <person name="Ashwell R.I.S."/>
            <person name="Aubin K."/>
            <person name="Babbage A.K."/>
            <person name="Bagguley C.L."/>
            <person name="Bailey J."/>
            <person name="Beasley H."/>
            <person name="Bethel G."/>
            <person name="Bird C.P."/>
            <person name="Bray-Allen S."/>
            <person name="Brown J.Y."/>
            <person name="Brown A.J."/>
            <person name="Buckley D."/>
            <person name="Burton J."/>
            <person name="Bye J."/>
            <person name="Carder C."/>
            <person name="Chapman J.C."/>
            <person name="Clark S.Y."/>
            <person name="Clarke G."/>
            <person name="Clee C."/>
            <person name="Cobley V."/>
            <person name="Collier R.E."/>
            <person name="Corby N."/>
            <person name="Coville G.J."/>
            <person name="Davies J."/>
            <person name="Deadman R."/>
            <person name="Dunn M."/>
            <person name="Earthrowl M."/>
            <person name="Ellington A.G."/>
            <person name="Errington H."/>
            <person name="Frankish A."/>
            <person name="Frankland J."/>
            <person name="French L."/>
            <person name="Garner P."/>
            <person name="Garnett J."/>
            <person name="Gay L."/>
            <person name="Ghori M.R.J."/>
            <person name="Gibson R."/>
            <person name="Gilby L.M."/>
            <person name="Gillett W."/>
            <person name="Glithero R.J."/>
            <person name="Grafham D.V."/>
            <person name="Griffiths C."/>
            <person name="Griffiths-Jones S."/>
            <person name="Grocock R."/>
            <person name="Hammond S."/>
            <person name="Harrison E.S.I."/>
            <person name="Hart E."/>
            <person name="Haugen E."/>
            <person name="Heath P.D."/>
            <person name="Holmes S."/>
            <person name="Holt K."/>
            <person name="Howden P.J."/>
            <person name="Hunt A.R."/>
            <person name="Hunt S.E."/>
            <person name="Hunter G."/>
            <person name="Isherwood J."/>
            <person name="James R."/>
            <person name="Johnson C."/>
            <person name="Johnson D."/>
            <person name="Joy A."/>
            <person name="Kay M."/>
            <person name="Kershaw J.K."/>
            <person name="Kibukawa M."/>
            <person name="Kimberley A.M."/>
            <person name="King A."/>
            <person name="Knights A.J."/>
            <person name="Lad H."/>
            <person name="Laird G."/>
            <person name="Lawlor S."/>
            <person name="Leongamornlert D.A."/>
            <person name="Lloyd D.M."/>
            <person name="Loveland J."/>
            <person name="Lovell J."/>
            <person name="Lush M.J."/>
            <person name="Lyne R."/>
            <person name="Martin S."/>
            <person name="Mashreghi-Mohammadi M."/>
            <person name="Matthews L."/>
            <person name="Matthews N.S.W."/>
            <person name="McLaren S."/>
            <person name="Milne S."/>
            <person name="Mistry S."/>
            <person name="Moore M.J.F."/>
            <person name="Nickerson T."/>
            <person name="O'Dell C.N."/>
            <person name="Oliver K."/>
            <person name="Palmeiri A."/>
            <person name="Palmer S.A."/>
            <person name="Parker A."/>
            <person name="Patel D."/>
            <person name="Pearce A.V."/>
            <person name="Peck A.I."/>
            <person name="Pelan S."/>
            <person name="Phelps K."/>
            <person name="Phillimore B.J."/>
            <person name="Plumb R."/>
            <person name="Rajan J."/>
            <person name="Raymond C."/>
            <person name="Rouse G."/>
            <person name="Saenphimmachak C."/>
            <person name="Sehra H.K."/>
            <person name="Sheridan E."/>
            <person name="Shownkeen R."/>
            <person name="Sims S."/>
            <person name="Skuce C.D."/>
            <person name="Smith M."/>
            <person name="Steward C."/>
            <person name="Subramanian S."/>
            <person name="Sycamore N."/>
            <person name="Tracey A."/>
            <person name="Tromans A."/>
            <person name="Van Helmond Z."/>
            <person name="Wall M."/>
            <person name="Wallis J.M."/>
            <person name="White S."/>
            <person name="Whitehead S.L."/>
            <person name="Wilkinson J.E."/>
            <person name="Willey D.L."/>
            <person name="Williams H."/>
            <person name="Wilming L."/>
            <person name="Wray P.W."/>
            <person name="Wu Z."/>
            <person name="Coulson A."/>
            <person name="Vaudin M."/>
            <person name="Sulston J.E."/>
            <person name="Durbin R.M."/>
            <person name="Hubbard T."/>
            <person name="Wooster R."/>
            <person name="Dunham I."/>
            <person name="Carter N.P."/>
            <person name="McVean G."/>
            <person name="Ross M.T."/>
            <person name="Harrow J."/>
            <person name="Olson M.V."/>
            <person name="Beck S."/>
            <person name="Rogers J."/>
            <person name="Bentley D.R."/>
        </authorList>
    </citation>
    <scope>NUCLEOTIDE SEQUENCE [LARGE SCALE GENOMIC DNA]</scope>
</reference>
<reference key="3">
    <citation type="journal article" date="2004" name="Genome Res.">
        <title>The status, quality, and expansion of the NIH full-length cDNA project: the Mammalian Gene Collection (MGC).</title>
        <authorList>
            <consortium name="The MGC Project Team"/>
        </authorList>
    </citation>
    <scope>NUCLEOTIDE SEQUENCE [LARGE SCALE MRNA] (ISOFORM 1)</scope>
    <source>
        <tissue>Eye</tissue>
    </source>
</reference>
<reference key="4">
    <citation type="journal article" date="2007" name="Hum. Mol. Genet.">
        <title>Evidence for a direct role of the disease modifier SCNM1 in splicing.</title>
        <authorList>
            <person name="Howell V.M."/>
            <person name="Jones J.M."/>
            <person name="Bergren S.K."/>
            <person name="Li L."/>
            <person name="Billi A.C."/>
            <person name="Avenarius M.R."/>
            <person name="Meisler M.H."/>
        </authorList>
    </citation>
    <scope>SUBCELLULAR LOCATION</scope>
    <scope>INTERACTION WITH SPLICEOSOMAL SM PROTEINS</scope>
</reference>
<reference key="5">
    <citation type="journal article" date="2008" name="J. Proteome Res.">
        <title>Combining protein-based IMAC, peptide-based IMAC, and MudPIT for efficient phosphoproteomic analysis.</title>
        <authorList>
            <person name="Cantin G.T."/>
            <person name="Yi W."/>
            <person name="Lu B."/>
            <person name="Park S.K."/>
            <person name="Xu T."/>
            <person name="Lee J.-D."/>
            <person name="Yates J.R. III"/>
        </authorList>
    </citation>
    <scope>IDENTIFICATION BY MASS SPECTROMETRY [LARGE SCALE ANALYSIS]</scope>
    <source>
        <tissue>Cervix carcinoma</tissue>
    </source>
</reference>
<reference key="6">
    <citation type="journal article" date="2008" name="Proc. Natl. Acad. Sci. U.S.A.">
        <title>A quantitative atlas of mitotic phosphorylation.</title>
        <authorList>
            <person name="Dephoure N."/>
            <person name="Zhou C."/>
            <person name="Villen J."/>
            <person name="Beausoleil S.A."/>
            <person name="Bakalarski C.E."/>
            <person name="Elledge S.J."/>
            <person name="Gygi S.P."/>
        </authorList>
    </citation>
    <scope>PHOSPHORYLATION [LARGE SCALE ANALYSIS] AT SER-144</scope>
    <scope>IDENTIFICATION BY MASS SPECTROMETRY [LARGE SCALE ANALYSIS]</scope>
    <source>
        <tissue>Cervix carcinoma</tissue>
    </source>
</reference>
<reference key="7">
    <citation type="journal article" date="2010" name="Sci. Signal.">
        <title>Quantitative phosphoproteomics reveals widespread full phosphorylation site occupancy during mitosis.</title>
        <authorList>
            <person name="Olsen J.V."/>
            <person name="Vermeulen M."/>
            <person name="Santamaria A."/>
            <person name="Kumar C."/>
            <person name="Miller M.L."/>
            <person name="Jensen L.J."/>
            <person name="Gnad F."/>
            <person name="Cox J."/>
            <person name="Jensen T.S."/>
            <person name="Nigg E.A."/>
            <person name="Brunak S."/>
            <person name="Mann M."/>
        </authorList>
    </citation>
    <scope>PHOSPHORYLATION [LARGE SCALE ANALYSIS] AT SER-219</scope>
    <scope>IDENTIFICATION BY MASS SPECTROMETRY [LARGE SCALE ANALYSIS]</scope>
    <source>
        <tissue>Cervix carcinoma</tissue>
    </source>
</reference>
<reference key="8">
    <citation type="journal article" date="2013" name="J. Proteome Res.">
        <title>Toward a comprehensive characterization of a human cancer cell phosphoproteome.</title>
        <authorList>
            <person name="Zhou H."/>
            <person name="Di Palma S."/>
            <person name="Preisinger C."/>
            <person name="Peng M."/>
            <person name="Polat A.N."/>
            <person name="Heck A.J."/>
            <person name="Mohammed S."/>
        </authorList>
    </citation>
    <scope>PHOSPHORYLATION [LARGE SCALE ANALYSIS] AT SER-2</scope>
    <scope>IDENTIFICATION BY MASS SPECTROMETRY [LARGE SCALE ANALYSIS]</scope>
    <source>
        <tissue>Cervix carcinoma</tissue>
        <tissue>Erythroleukemia</tissue>
    </source>
</reference>
<reference key="9">
    <citation type="journal article" date="2014" name="J. Proteomics">
        <title>An enzyme assisted RP-RPLC approach for in-depth analysis of human liver phosphoproteome.</title>
        <authorList>
            <person name="Bian Y."/>
            <person name="Song C."/>
            <person name="Cheng K."/>
            <person name="Dong M."/>
            <person name="Wang F."/>
            <person name="Huang J."/>
            <person name="Sun D."/>
            <person name="Wang L."/>
            <person name="Ye M."/>
            <person name="Zou H."/>
        </authorList>
    </citation>
    <scope>IDENTIFICATION BY MASS SPECTROMETRY [LARGE SCALE ANALYSIS]</scope>
    <source>
        <tissue>Liver</tissue>
    </source>
</reference>
<reference key="10">
    <citation type="journal article" date="2017" name="Nat. Struct. Mol. Biol.">
        <title>Site-specific mapping of the human SUMO proteome reveals co-modification with phosphorylation.</title>
        <authorList>
            <person name="Hendriks I.A."/>
            <person name="Lyon D."/>
            <person name="Young C."/>
            <person name="Jensen L.J."/>
            <person name="Vertegaal A.C."/>
            <person name="Nielsen M.L."/>
        </authorList>
    </citation>
    <scope>SUMOYLATION [LARGE SCALE ANALYSIS] AT LYS-67</scope>
    <scope>IDENTIFICATION BY MASS SPECTROMETRY [LARGE SCALE ANALYSIS]</scope>
</reference>
<reference evidence="10" key="11">
    <citation type="journal article" date="2021" name="Science">
        <title>Structure of the activated human minor spliceosome.</title>
        <authorList>
            <person name="Bai R."/>
            <person name="Wan R."/>
            <person name="Wang L."/>
            <person name="Xu K."/>
            <person name="Zhang Q."/>
            <person name="Lei J."/>
            <person name="Shi Y."/>
        </authorList>
    </citation>
    <scope>STRUCTURE BY ELECTRON MICROSCOPY (2.89 ANGSTROMS)</scope>
    <scope>SUBUNIT</scope>
</reference>
<reference key="12">
    <citation type="journal article" date="2022" name="Am. J. Hum. Genet.">
        <title>Mutations in SCNM1 cause orofaciodigital syndrome due to minor intron splicing defects affecting primary cilia.</title>
        <authorList>
            <person name="Iturrate A."/>
            <person name="Rivera-Barahona A."/>
            <person name="Flores C.L."/>
            <person name="Otaify G.A."/>
            <person name="Elhossini R."/>
            <person name="Perez-Sanz M.L."/>
            <person name="Nevado J."/>
            <person name="Tenorio-Castano J."/>
            <person name="Trivino J.C."/>
            <person name="Garcia-Gonzalo F.R."/>
            <person name="Piceci-Sparascio F."/>
            <person name="De Luca A."/>
            <person name="Martinez L."/>
            <person name="Kalayci T."/>
            <person name="Lapunzina P."/>
            <person name="Altunoglu U."/>
            <person name="Aglan M."/>
            <person name="Abdalla E."/>
            <person name="Ruiz-Perez V.L."/>
        </authorList>
    </citation>
    <scope>INVOLVEMENT IN OFD19</scope>
    <scope>VARIANT OFD19 GLN-51</scope>
    <scope>CHARACTERIZATION OF VARIANT OFD19 GLN-51</scope>
    <scope>FUNCTION</scope>
</reference>
<organism>
    <name type="scientific">Homo sapiens</name>
    <name type="common">Human</name>
    <dbReference type="NCBI Taxonomy" id="9606"/>
    <lineage>
        <taxon>Eukaryota</taxon>
        <taxon>Metazoa</taxon>
        <taxon>Chordata</taxon>
        <taxon>Craniata</taxon>
        <taxon>Vertebrata</taxon>
        <taxon>Euteleostomi</taxon>
        <taxon>Mammalia</taxon>
        <taxon>Eutheria</taxon>
        <taxon>Euarchontoglires</taxon>
        <taxon>Primates</taxon>
        <taxon>Haplorrhini</taxon>
        <taxon>Catarrhini</taxon>
        <taxon>Hominidae</taxon>
        <taxon>Homo</taxon>
    </lineage>
</organism>
<proteinExistence type="evidence at protein level"/>
<keyword id="KW-0002">3D-structure</keyword>
<keyword id="KW-0025">Alternative splicing</keyword>
<keyword id="KW-1186">Ciliopathy</keyword>
<keyword id="KW-0225">Disease variant</keyword>
<keyword id="KW-1017">Isopeptide bond</keyword>
<keyword id="KW-0479">Metal-binding</keyword>
<keyword id="KW-0507">mRNA processing</keyword>
<keyword id="KW-0508">mRNA splicing</keyword>
<keyword id="KW-0539">Nucleus</keyword>
<keyword id="KW-0597">Phosphoprotein</keyword>
<keyword id="KW-1267">Proteomics identification</keyword>
<keyword id="KW-1185">Reference proteome</keyword>
<keyword id="KW-0747">Spliceosome</keyword>
<keyword id="KW-0832">Ubl conjugation</keyword>
<keyword id="KW-0862">Zinc</keyword>
<keyword id="KW-0863">Zinc-finger</keyword>
<evidence type="ECO:0000250" key="1"/>
<evidence type="ECO:0000250" key="2">
    <source>
        <dbReference type="UniProtKB" id="Q8K136"/>
    </source>
</evidence>
<evidence type="ECO:0000255" key="3"/>
<evidence type="ECO:0000256" key="4">
    <source>
        <dbReference type="SAM" id="MobiDB-lite"/>
    </source>
</evidence>
<evidence type="ECO:0000269" key="5">
    <source>
    </source>
</evidence>
<evidence type="ECO:0000269" key="6">
    <source>
    </source>
</evidence>
<evidence type="ECO:0000269" key="7">
    <source>
    </source>
</evidence>
<evidence type="ECO:0000303" key="8">
    <source>
    </source>
</evidence>
<evidence type="ECO:0000305" key="9"/>
<evidence type="ECO:0007744" key="10">
    <source>
        <dbReference type="PDB" id="7DVQ"/>
    </source>
</evidence>
<evidence type="ECO:0007744" key="11">
    <source>
    </source>
</evidence>
<evidence type="ECO:0007744" key="12">
    <source>
    </source>
</evidence>
<evidence type="ECO:0007744" key="13">
    <source>
    </source>
</evidence>
<evidence type="ECO:0007744" key="14">
    <source>
    </source>
</evidence>
<evidence type="ECO:0007829" key="15">
    <source>
        <dbReference type="PDB" id="7DVQ"/>
    </source>
</evidence>
<accession>Q9BWG6</accession>
<accession>B4DWR1</accession>
<accession>Q5JR74</accession>
<comment type="function">
    <text evidence="7">As a component of the minor spliceosome, involved in the splicing of U12-type introns in pre-mRNAs (PubMed:36084634). Plays a role in the regulation of primary cilia length and Hedgehog signaling (PubMed:36084634).</text>
</comment>
<comment type="subunit">
    <text evidence="2 5 6">Component of the minor spliceosome, which splices U12-type introns (PubMed:17656373, PubMed:33509932). Within this complex, interacts with RNF113A, as well as with SF3B1/SF3b155, SF3B2/SF3b145, SF3B3/SF3b130 and CDC5L (PubMed:33509932). May interact with LUC7L2 and SNRNP70 (By similarity).</text>
</comment>
<comment type="interaction">
    <interactant intactId="EBI-748391">
        <id>Q9BWG6</id>
    </interactant>
    <interactant intactId="EBI-10173507">
        <id>Q6UY14-3</id>
        <label>ADAMTSL4</label>
    </interactant>
    <organismsDiffer>false</organismsDiffer>
    <experiments>3</experiments>
</comment>
<comment type="interaction">
    <interactant intactId="EBI-748391">
        <id>Q9BWG6</id>
    </interactant>
    <interactant intactId="EBI-11745576">
        <id>Q6PJH3</id>
        <label>AKAP9</label>
    </interactant>
    <organismsDiffer>false</organismsDiffer>
    <experiments>3</experiments>
</comment>
<comment type="interaction">
    <interactant intactId="EBI-748391">
        <id>Q9BWG6</id>
    </interactant>
    <interactant intactId="EBI-8640233">
        <id>Q5T686</id>
        <label>AVPI1</label>
    </interactant>
    <organismsDiffer>false</organismsDiffer>
    <experiments>3</experiments>
</comment>
<comment type="interaction">
    <interactant intactId="EBI-748391">
        <id>Q9BWG6</id>
    </interactant>
    <interactant intactId="EBI-4400025">
        <id>Q9Y2T1</id>
        <label>AXIN2</label>
    </interactant>
    <organismsDiffer>false</organismsDiffer>
    <experiments>3</experiments>
</comment>
<comment type="interaction">
    <interactant intactId="EBI-748391">
        <id>Q9BWG6</id>
    </interactant>
    <interactant intactId="EBI-1642333">
        <id>Q9BYV9</id>
        <label>BACH2</label>
    </interactant>
    <organismsDiffer>false</organismsDiffer>
    <experiments>3</experiments>
</comment>
<comment type="interaction">
    <interactant intactId="EBI-748391">
        <id>Q9BWG6</id>
    </interactant>
    <interactant intactId="EBI-10181188">
        <id>Q8N7W2-2</id>
        <label>BEND7</label>
    </interactant>
    <organismsDiffer>false</organismsDiffer>
    <experiments>3</experiments>
</comment>
<comment type="interaction">
    <interactant intactId="EBI-748391">
        <id>Q9BWG6</id>
    </interactant>
    <interactant intactId="EBI-2548012">
        <id>Q9H2G9</id>
        <label>BLZF1</label>
    </interactant>
    <organismsDiffer>false</organismsDiffer>
    <experiments>6</experiments>
</comment>
<comment type="interaction">
    <interactant intactId="EBI-748391">
        <id>Q9BWG6</id>
    </interactant>
    <interactant intactId="EBI-739580">
        <id>Q13137</id>
        <label>CALCOCO2</label>
    </interactant>
    <organismsDiffer>false</organismsDiffer>
    <experiments>3</experiments>
</comment>
<comment type="interaction">
    <interactant intactId="EBI-748391">
        <id>Q9BWG6</id>
    </interactant>
    <interactant intactId="EBI-3866279">
        <id>Q9BWT7</id>
        <label>CARD10</label>
    </interactant>
    <organismsDiffer>false</organismsDiffer>
    <experiments>3</experiments>
</comment>
<comment type="interaction">
    <interactant intactId="EBI-748391">
        <id>Q9BWG6</id>
    </interactant>
    <interactant intactId="EBI-11530605">
        <id>Q9H257-2</id>
        <label>CARD9</label>
    </interactant>
    <organismsDiffer>false</organismsDiffer>
    <experiments>3</experiments>
</comment>
<comment type="interaction">
    <interactant intactId="EBI-748391">
        <id>Q9BWG6</id>
    </interactant>
    <interactant intactId="EBI-741724">
        <id>Q8NA61</id>
        <label>CBY2</label>
    </interactant>
    <organismsDiffer>false</organismsDiffer>
    <experiments>3</experiments>
</comment>
<comment type="interaction">
    <interactant intactId="EBI-748391">
        <id>Q9BWG6</id>
    </interactant>
    <interactant intactId="EBI-11524851">
        <id>Q8NA61-2</id>
        <label>CBY2</label>
    </interactant>
    <organismsDiffer>false</organismsDiffer>
    <experiments>5</experiments>
</comment>
<comment type="interaction">
    <interactant intactId="EBI-748391">
        <id>Q9BWG6</id>
    </interactant>
    <interactant intactId="EBI-12920646">
        <id>Q9BUN5-3</id>
        <label>CCDC28B</label>
    </interactant>
    <organismsDiffer>false</organismsDiffer>
    <experiments>3</experiments>
</comment>
<comment type="interaction">
    <interactant intactId="EBI-748391">
        <id>Q9BWG6</id>
    </interactant>
    <interactant intactId="EBI-17967022">
        <id>Q96LY2-2</id>
        <label>CCDC74B</label>
    </interactant>
    <organismsDiffer>false</organismsDiffer>
    <experiments>3</experiments>
</comment>
<comment type="interaction">
    <interactant intactId="EBI-748391">
        <id>Q9BWG6</id>
    </interactant>
    <interactant intactId="EBI-1181367">
        <id>Q01850</id>
        <label>CDR2</label>
    </interactant>
    <organismsDiffer>false</organismsDiffer>
    <experiments>6</experiments>
</comment>
<comment type="interaction">
    <interactant intactId="EBI-748391">
        <id>Q9BWG6</id>
    </interactant>
    <interactant intactId="EBI-11063830">
        <id>Q86X02</id>
        <label>CDR2L</label>
    </interactant>
    <organismsDiffer>false</organismsDiffer>
    <experiments>3</experiments>
</comment>
<comment type="interaction">
    <interactant intactId="EBI-748391">
        <id>Q9BWG6</id>
    </interactant>
    <interactant intactId="EBI-744115">
        <id>Q9C0F1</id>
        <label>CEP44</label>
    </interactant>
    <organismsDiffer>false</organismsDiffer>
    <experiments>3</experiments>
</comment>
<comment type="interaction">
    <interactant intactId="EBI-748391">
        <id>Q9BWG6</id>
    </interactant>
    <interactant intactId="EBI-739624">
        <id>Q8NHQ1</id>
        <label>CEP70</label>
    </interactant>
    <organismsDiffer>false</organismsDiffer>
    <experiments>3</experiments>
</comment>
<comment type="interaction">
    <interactant intactId="EBI-748391">
        <id>Q9BWG6</id>
    </interactant>
    <interactant intactId="EBI-742887">
        <id>Q8TAP6</id>
        <label>CEP76</label>
    </interactant>
    <organismsDiffer>false</organismsDiffer>
    <experiments>3</experiments>
</comment>
<comment type="interaction">
    <interactant intactId="EBI-748391">
        <id>Q9BWG6</id>
    </interactant>
    <interactant intactId="EBI-741528">
        <id>Q9UKJ5</id>
        <label>CHIC2</label>
    </interactant>
    <organismsDiffer>false</organismsDiffer>
    <experiments>3</experiments>
</comment>
<comment type="interaction">
    <interactant intactId="EBI-748391">
        <id>Q9BWG6</id>
    </interactant>
    <interactant intactId="EBI-10292696">
        <id>Q96Q77</id>
        <label>CIB3</label>
    </interactant>
    <organismsDiffer>false</organismsDiffer>
    <experiments>6</experiments>
</comment>
<comment type="interaction">
    <interactant intactId="EBI-748391">
        <id>Q9BWG6</id>
    </interactant>
    <interactant intactId="EBI-3866319">
        <id>Q9Y2V7</id>
        <label>COG6</label>
    </interactant>
    <organismsDiffer>false</organismsDiffer>
    <experiments>5</experiments>
</comment>
<comment type="interaction">
    <interactant intactId="EBI-748391">
        <id>Q9BWG6</id>
    </interactant>
    <interactant intactId="EBI-751587">
        <id>Q9GZU7</id>
        <label>CTDSP1</label>
    </interactant>
    <organismsDiffer>false</organismsDiffer>
    <experiments>3</experiments>
</comment>
<comment type="interaction">
    <interactant intactId="EBI-748391">
        <id>Q9BWG6</id>
    </interactant>
    <interactant intactId="EBI-3867333">
        <id>A8MQ03</id>
        <label>CYSRT1</label>
    </interactant>
    <organismsDiffer>false</organismsDiffer>
    <experiments>3</experiments>
</comment>
<comment type="interaction">
    <interactant intactId="EBI-748391">
        <id>Q9BWG6</id>
    </interactant>
    <interactant intactId="EBI-997814">
        <id>O60759</id>
        <label>CYTIP</label>
    </interactant>
    <organismsDiffer>false</organismsDiffer>
    <experiments>3</experiments>
</comment>
<comment type="interaction">
    <interactant intactId="EBI-748391">
        <id>Q9BWG6</id>
    </interactant>
    <interactant intactId="EBI-12827735">
        <id>Q86X51</id>
        <label>EZHIP</label>
    </interactant>
    <organismsDiffer>false</organismsDiffer>
    <experiments>3</experiments>
</comment>
<comment type="interaction">
    <interactant intactId="EBI-748391">
        <id>Q9BWG6</id>
    </interactant>
    <interactant intactId="EBI-719941">
        <id>Q3B820</id>
        <label>FAM161A</label>
    </interactant>
    <organismsDiffer>false</organismsDiffer>
    <experiments>3</experiments>
</comment>
<comment type="interaction">
    <interactant intactId="EBI-748391">
        <id>Q9BWG6</id>
    </interactant>
    <interactant intactId="EBI-12958227">
        <id>Q86W67</id>
        <label>FAM228A</label>
    </interactant>
    <organismsDiffer>false</organismsDiffer>
    <experiments>3</experiments>
</comment>
<comment type="interaction">
    <interactant intactId="EBI-748391">
        <id>Q9BWG6</id>
    </interactant>
    <interactant intactId="EBI-2339898">
        <id>Q9NW38</id>
        <label>FANCL</label>
    </interactant>
    <organismsDiffer>false</organismsDiffer>
    <experiments>3</experiments>
</comment>
<comment type="interaction">
    <interactant intactId="EBI-748391">
        <id>Q9BWG6</id>
    </interactant>
    <interactant intactId="EBI-701903">
        <id>Q14192</id>
        <label>FHL2</label>
    </interactant>
    <organismsDiffer>false</organismsDiffer>
    <experiments>3</experiments>
</comment>
<comment type="interaction">
    <interactant intactId="EBI-748391">
        <id>Q9BWG6</id>
    </interactant>
    <interactant intactId="EBI-750641">
        <id>Q5TD97</id>
        <label>FHL5</label>
    </interactant>
    <organismsDiffer>false</organismsDiffer>
    <experiments>7</experiments>
</comment>
<comment type="interaction">
    <interactant intactId="EBI-748391">
        <id>Q9BWG6</id>
    </interactant>
    <interactant intactId="EBI-744935">
        <id>Q9BVV2</id>
        <label>FNDC11</label>
    </interactant>
    <organismsDiffer>false</organismsDiffer>
    <experiments>3</experiments>
</comment>
<comment type="interaction">
    <interactant intactId="EBI-748391">
        <id>Q9BWG6</id>
    </interactant>
    <interactant intactId="EBI-725515">
        <id>O43559</id>
        <label>FRS3</label>
    </interactant>
    <organismsDiffer>false</organismsDiffer>
    <experiments>3</experiments>
</comment>
<comment type="interaction">
    <interactant intactId="EBI-748391">
        <id>Q9BWG6</id>
    </interactant>
    <interactant intactId="EBI-5661036">
        <id>A1L4K1</id>
        <label>FSD2</label>
    </interactant>
    <organismsDiffer>false</organismsDiffer>
    <experiments>3</experiments>
</comment>
<comment type="interaction">
    <interactant intactId="EBI-748391">
        <id>Q9BWG6</id>
    </interactant>
    <interactant intactId="EBI-1052570">
        <id>O95995</id>
        <label>GAS8</label>
    </interactant>
    <organismsDiffer>false</organismsDiffer>
    <experiments>3</experiments>
</comment>
<comment type="interaction">
    <interactant intactId="EBI-748391">
        <id>Q9BWG6</id>
    </interactant>
    <interactant intactId="EBI-947774">
        <id>O75420</id>
        <label>GIGYF1</label>
    </interactant>
    <organismsDiffer>false</organismsDiffer>
    <experiments>3</experiments>
</comment>
<comment type="interaction">
    <interactant intactId="EBI-748391">
        <id>Q9BWG6</id>
    </interactant>
    <interactant intactId="EBI-618309">
        <id>Q08379</id>
        <label>GOLGA2</label>
    </interactant>
    <organismsDiffer>false</organismsDiffer>
    <experiments>5</experiments>
</comment>
<comment type="interaction">
    <interactant intactId="EBI-748391">
        <id>Q9BWG6</id>
    </interactant>
    <interactant intactId="EBI-5916454">
        <id>A6NEM1</id>
        <label>GOLGA6L9</label>
    </interactant>
    <organismsDiffer>false</organismsDiffer>
    <experiments>5</experiments>
</comment>
<comment type="interaction">
    <interactant intactId="EBI-748391">
        <id>Q9BWG6</id>
    </interactant>
    <interactant intactId="EBI-11519926">
        <id>Q6PI77</id>
        <label>GPRASP3</label>
    </interactant>
    <organismsDiffer>false</organismsDiffer>
    <experiments>3</experiments>
</comment>
<comment type="interaction">
    <interactant intactId="EBI-748391">
        <id>Q9BWG6</id>
    </interactant>
    <interactant intactId="EBI-712814">
        <id>P54257</id>
        <label>HAP1</label>
    </interactant>
    <organismsDiffer>false</organismsDiffer>
    <experiments>3</experiments>
</comment>
<comment type="interaction">
    <interactant intactId="EBI-748391">
        <id>Q9BWG6</id>
    </interactant>
    <interactant intactId="EBI-2549423">
        <id>Q6NT76</id>
        <label>HMBOX1</label>
    </interactant>
    <organismsDiffer>false</organismsDiffer>
    <experiments>3</experiments>
</comment>
<comment type="interaction">
    <interactant intactId="EBI-748391">
        <id>Q9BWG6</id>
    </interactant>
    <interactant intactId="EBI-740641">
        <id>Q9NP66</id>
        <label>HMG20A</label>
    </interactant>
    <organismsDiffer>false</organismsDiffer>
    <experiments>7</experiments>
</comment>
<comment type="interaction">
    <interactant intactId="EBI-748391">
        <id>Q9BWG6</id>
    </interactant>
    <interactant intactId="EBI-748420">
        <id>Q9NSC5</id>
        <label>HOMER3</label>
    </interactant>
    <organismsDiffer>false</organismsDiffer>
    <experiments>3</experiments>
</comment>
<comment type="interaction">
    <interactant intactId="EBI-748391">
        <id>Q9BWG6</id>
    </interactant>
    <interactant intactId="EBI-10961706">
        <id>Q96ED9-2</id>
        <label>HOOK2</label>
    </interactant>
    <organismsDiffer>false</organismsDiffer>
    <experiments>3</experiments>
</comment>
<comment type="interaction">
    <interactant intactId="EBI-748391">
        <id>Q9BWG6</id>
    </interactant>
    <interactant intactId="EBI-7116203">
        <id>O75031</id>
        <label>HSF2BP</label>
    </interactant>
    <organismsDiffer>false</organismsDiffer>
    <experiments>3</experiments>
</comment>
<comment type="interaction">
    <interactant intactId="EBI-748391">
        <id>Q9BWG6</id>
    </interactant>
    <interactant intactId="EBI-745305">
        <id>Q13422</id>
        <label>IKZF1</label>
    </interactant>
    <organismsDiffer>false</organismsDiffer>
    <experiments>3</experiments>
</comment>
<comment type="interaction">
    <interactant intactId="EBI-748391">
        <id>Q9BWG6</id>
    </interactant>
    <interactant intactId="EBI-11522367">
        <id>Q13422-7</id>
        <label>IKZF1</label>
    </interactant>
    <organismsDiffer>false</organismsDiffer>
    <experiments>3</experiments>
</comment>
<comment type="interaction">
    <interactant intactId="EBI-748391">
        <id>Q9BWG6</id>
    </interactant>
    <interactant intactId="EBI-747204">
        <id>Q9UKT9</id>
        <label>IKZF3</label>
    </interactant>
    <organismsDiffer>false</organismsDiffer>
    <experiments>3</experiments>
</comment>
<comment type="interaction">
    <interactant intactId="EBI-748391">
        <id>Q9BWG6</id>
    </interactant>
    <interactant intactId="EBI-6509505">
        <id>Q0VD86</id>
        <label>INCA1</label>
    </interactant>
    <organismsDiffer>false</organismsDiffer>
    <experiments>4</experiments>
</comment>
<comment type="interaction">
    <interactant intactId="EBI-748391">
        <id>Q9BWG6</id>
    </interactant>
    <interactant intactId="EBI-9658404">
        <id>Q5VVH5</id>
        <label>IRAK1BP1</label>
    </interactant>
    <organismsDiffer>false</organismsDiffer>
    <experiments>3</experiments>
</comment>
<comment type="interaction">
    <interactant intactId="EBI-748391">
        <id>Q9BWG6</id>
    </interactant>
    <interactant intactId="EBI-2680803">
        <id>Q96N16</id>
        <label>JAKMIP1</label>
    </interactant>
    <organismsDiffer>false</organismsDiffer>
    <experiments>3</experiments>
</comment>
<comment type="interaction">
    <interactant intactId="EBI-748391">
        <id>Q9BWG6</id>
    </interactant>
    <interactant intactId="EBI-2556193">
        <id>Q63ZY3</id>
        <label>KANK2</label>
    </interactant>
    <organismsDiffer>false</organismsDiffer>
    <experiments>6</experiments>
</comment>
<comment type="interaction">
    <interactant intactId="EBI-748391">
        <id>Q9BWG6</id>
    </interactant>
    <interactant intactId="EBI-715394">
        <id>Q9H079</id>
        <label>KATNBL1</label>
    </interactant>
    <organismsDiffer>false</organismsDiffer>
    <experiments>3</experiments>
</comment>
<comment type="interaction">
    <interactant intactId="EBI-748391">
        <id>Q9BWG6</id>
    </interactant>
    <interactant intactId="EBI-14069005">
        <id>Q9BVG8-5</id>
        <label>KIFC3</label>
    </interactant>
    <organismsDiffer>false</organismsDiffer>
    <experiments>3</experiments>
</comment>
<comment type="interaction">
    <interactant intactId="EBI-748391">
        <id>Q9BWG6</id>
    </interactant>
    <interactant intactId="EBI-2796400">
        <id>Q9UIH9</id>
        <label>KLF15</label>
    </interactant>
    <organismsDiffer>false</organismsDiffer>
    <experiments>3</experiments>
</comment>
<comment type="interaction">
    <interactant intactId="EBI-748391">
        <id>Q9BWG6</id>
    </interactant>
    <interactant intactId="EBI-3044087">
        <id>Q7Z3Y8</id>
        <label>KRT27</label>
    </interactant>
    <organismsDiffer>false</organismsDiffer>
    <experiments>3</experiments>
</comment>
<comment type="interaction">
    <interactant intactId="EBI-748391">
        <id>Q9BWG6</id>
    </interactant>
    <interactant intactId="EBI-948001">
        <id>Q15323</id>
        <label>KRT31</label>
    </interactant>
    <organismsDiffer>false</organismsDiffer>
    <experiments>6</experiments>
</comment>
<comment type="interaction">
    <interactant intactId="EBI-748391">
        <id>Q9BWG6</id>
    </interactant>
    <interactant intactId="EBI-1049638">
        <id>Q14525</id>
        <label>KRT33B</label>
    </interactant>
    <organismsDiffer>false</organismsDiffer>
    <experiments>3</experiments>
</comment>
<comment type="interaction">
    <interactant intactId="EBI-748391">
        <id>Q9BWG6</id>
    </interactant>
    <interactant intactId="EBI-1047093">
        <id>O76011</id>
        <label>KRT34</label>
    </interactant>
    <organismsDiffer>false</organismsDiffer>
    <experiments>5</experiments>
</comment>
<comment type="interaction">
    <interactant intactId="EBI-748391">
        <id>Q9BWG6</id>
    </interactant>
    <interactant intactId="EBI-1058674">
        <id>Q92764</id>
        <label>KRT35</label>
    </interactant>
    <organismsDiffer>false</organismsDiffer>
    <experiments>3</experiments>
</comment>
<comment type="interaction">
    <interactant intactId="EBI-748391">
        <id>Q9BWG6</id>
    </interactant>
    <interactant intactId="EBI-1047263">
        <id>O76015</id>
        <label>KRT38</label>
    </interactant>
    <organismsDiffer>false</organismsDiffer>
    <experiments>9</experiments>
</comment>
<comment type="interaction">
    <interactant intactId="EBI-748391">
        <id>Q9BWG6</id>
    </interactant>
    <interactant intactId="EBI-11958242">
        <id>Q6A163</id>
        <label>KRT39</label>
    </interactant>
    <organismsDiffer>false</organismsDiffer>
    <experiments>3</experiments>
</comment>
<comment type="interaction">
    <interactant intactId="EBI-748391">
        <id>Q9BWG6</id>
    </interactant>
    <interactant intactId="EBI-2949715">
        <id>O95678</id>
        <label>KRT75</label>
    </interactant>
    <organismsDiffer>false</organismsDiffer>
    <experiments>3</experiments>
</comment>
<comment type="interaction">
    <interactant intactId="EBI-748391">
        <id>Q9BWG6</id>
    </interactant>
    <interactant intactId="EBI-11959885">
        <id>Q07627</id>
        <label>KRTAP1-1</label>
    </interactant>
    <organismsDiffer>false</organismsDiffer>
    <experiments>3</experiments>
</comment>
<comment type="interaction">
    <interactant intactId="EBI-748391">
        <id>Q9BWG6</id>
    </interactant>
    <interactant intactId="EBI-10172150">
        <id>P60370</id>
        <label>KRTAP10-5</label>
    </interactant>
    <organismsDiffer>false</organismsDiffer>
    <experiments>3</experiments>
</comment>
<comment type="interaction">
    <interactant intactId="EBI-748391">
        <id>Q9BWG6</id>
    </interactant>
    <interactant intactId="EBI-10172290">
        <id>P60409</id>
        <label>KRTAP10-7</label>
    </interactant>
    <organismsDiffer>false</organismsDiffer>
    <experiments>3</experiments>
</comment>
<comment type="interaction">
    <interactant intactId="EBI-748391">
        <id>Q9BWG6</id>
    </interactant>
    <interactant intactId="EBI-10171774">
        <id>P60410</id>
        <label>KRTAP10-8</label>
    </interactant>
    <organismsDiffer>false</organismsDiffer>
    <experiments>6</experiments>
</comment>
<comment type="interaction">
    <interactant intactId="EBI-748391">
        <id>Q9BWG6</id>
    </interactant>
    <interactant intactId="EBI-10172052">
        <id>P60411</id>
        <label>KRTAP10-9</label>
    </interactant>
    <organismsDiffer>false</organismsDiffer>
    <experiments>3</experiments>
</comment>
<comment type="interaction">
    <interactant intactId="EBI-748391">
        <id>Q9BWG6</id>
    </interactant>
    <interactant intactId="EBI-3958099">
        <id>P26371</id>
        <label>KRTAP5-9</label>
    </interactant>
    <organismsDiffer>false</organismsDiffer>
    <experiments>3</experiments>
</comment>
<comment type="interaction">
    <interactant intactId="EBI-748391">
        <id>Q9BWG6</id>
    </interactant>
    <interactant intactId="EBI-11911016">
        <id>P80188</id>
        <label>LCN2</label>
    </interactant>
    <organismsDiffer>false</organismsDiffer>
    <experiments>3</experiments>
</comment>
<comment type="interaction">
    <interactant intactId="EBI-748391">
        <id>Q9BWG6</id>
    </interactant>
    <interactant intactId="EBI-740738">
        <id>O95751</id>
        <label>LDOC1</label>
    </interactant>
    <organismsDiffer>false</organismsDiffer>
    <experiments>3</experiments>
</comment>
<comment type="interaction">
    <interactant intactId="EBI-748391">
        <id>Q9BWG6</id>
    </interactant>
    <interactant intactId="EBI-11990598">
        <id>P48742</id>
        <label>LHX1</label>
    </interactant>
    <organismsDiffer>false</organismsDiffer>
    <experiments>3</experiments>
</comment>
<comment type="interaction">
    <interactant intactId="EBI-748391">
        <id>Q9BWG6</id>
    </interactant>
    <interactant intactId="EBI-12039345">
        <id>Q9UBR4-2</id>
        <label>LHX3</label>
    </interactant>
    <organismsDiffer>false</organismsDiffer>
    <experiments>3</experiments>
</comment>
<comment type="interaction">
    <interactant intactId="EBI-748391">
        <id>Q9BWG6</id>
    </interactant>
    <interactant intactId="EBI-12864460">
        <id>P48059-3</id>
        <label>LIMS1</label>
    </interactant>
    <organismsDiffer>false</organismsDiffer>
    <experiments>3</experiments>
</comment>
<comment type="interaction">
    <interactant intactId="EBI-748391">
        <id>Q9BWG6</id>
    </interactant>
    <interactant intactId="EBI-739832">
        <id>Q8TBB1</id>
        <label>LNX1</label>
    </interactant>
    <organismsDiffer>false</organismsDiffer>
    <experiments>3</experiments>
</comment>
<comment type="interaction">
    <interactant intactId="EBI-748391">
        <id>Q9BWG6</id>
    </interactant>
    <interactant intactId="EBI-18273118">
        <id>Q9P2M1</id>
        <label>LRP2BP</label>
    </interactant>
    <organismsDiffer>false</organismsDiffer>
    <experiments>3</experiments>
</comment>
<comment type="interaction">
    <interactant intactId="EBI-748391">
        <id>Q9BWG6</id>
    </interactant>
    <interactant intactId="EBI-1216080">
        <id>Q9Y250</id>
        <label>LZTS1</label>
    </interactant>
    <organismsDiffer>false</organismsDiffer>
    <experiments>3</experiments>
</comment>
<comment type="interaction">
    <interactant intactId="EBI-748391">
        <id>Q9BWG6</id>
    </interactant>
    <interactant intactId="EBI-741037">
        <id>Q9BRK4</id>
        <label>LZTS2</label>
    </interactant>
    <organismsDiffer>false</organismsDiffer>
    <experiments>3</experiments>
</comment>
<comment type="interaction">
    <interactant intactId="EBI-748391">
        <id>Q9BWG6</id>
    </interactant>
    <interactant intactId="EBI-724076">
        <id>Q99750</id>
        <label>MDFI</label>
    </interactant>
    <organismsDiffer>false</organismsDiffer>
    <experiments>3</experiments>
</comment>
<comment type="interaction">
    <interactant intactId="EBI-748391">
        <id>Q9BWG6</id>
    </interactant>
    <interactant intactId="EBI-748397">
        <id>P50222</id>
        <label>MEOX2</label>
    </interactant>
    <organismsDiffer>false</organismsDiffer>
    <experiments>3</experiments>
</comment>
<comment type="interaction">
    <interactant intactId="EBI-748391">
        <id>Q9BWG6</id>
    </interactant>
    <interactant intactId="EBI-10172526">
        <id>Q9UJV3-2</id>
        <label>MID2</label>
    </interactant>
    <organismsDiffer>false</organismsDiffer>
    <experiments>3</experiments>
</comment>
<comment type="interaction">
    <interactant intactId="EBI-748391">
        <id>Q9BWG6</id>
    </interactant>
    <interactant intactId="EBI-2548751">
        <id>Q8TD10</id>
        <label>MIPOL1</label>
    </interactant>
    <organismsDiffer>false</organismsDiffer>
    <experiments>6</experiments>
</comment>
<comment type="interaction">
    <interactant intactId="EBI-748391">
        <id>Q9BWG6</id>
    </interactant>
    <interactant intactId="EBI-2340269">
        <id>Q13064</id>
        <label>MKRN3</label>
    </interactant>
    <organismsDiffer>false</organismsDiffer>
    <experiments>8</experiments>
</comment>
<comment type="interaction">
    <interactant intactId="EBI-748391">
        <id>Q9BWG6</id>
    </interactant>
    <interactant intactId="EBI-9675802">
        <id>Q6PF18</id>
        <label>MORN3</label>
    </interactant>
    <organismsDiffer>false</organismsDiffer>
    <experiments>5</experiments>
</comment>
<comment type="interaction">
    <interactant intactId="EBI-748391">
        <id>Q9BWG6</id>
    </interactant>
    <interactant intactId="EBI-723426">
        <id>Q13084</id>
        <label>MRPL28</label>
    </interactant>
    <organismsDiffer>false</organismsDiffer>
    <experiments>3</experiments>
</comment>
<comment type="interaction">
    <interactant intactId="EBI-748391">
        <id>Q9BWG6</id>
    </interactant>
    <interactant intactId="EBI-11599933">
        <id>Q4VC12</id>
        <label>MSS51</label>
    </interactant>
    <organismsDiffer>false</organismsDiffer>
    <experiments>3</experiments>
</comment>
<comment type="interaction">
    <interactant intactId="EBI-748391">
        <id>Q9BWG6</id>
    </interactant>
    <interactant intactId="EBI-11522433">
        <id>Q5JR59-3</id>
        <label>MTUS2</label>
    </interactant>
    <organismsDiffer>false</organismsDiffer>
    <experiments>7</experiments>
</comment>
<comment type="interaction">
    <interactant intactId="EBI-748391">
        <id>Q9BWG6</id>
    </interactant>
    <interactant intactId="EBI-6952711">
        <id>Q8WY64</id>
        <label>MYLIP</label>
    </interactant>
    <organismsDiffer>false</organismsDiffer>
    <experiments>3</experiments>
</comment>
<comment type="interaction">
    <interactant intactId="EBI-748391">
        <id>Q9BWG6</id>
    </interactant>
    <interactant intactId="EBI-741792">
        <id>O00160</id>
        <label>MYO1F</label>
    </interactant>
    <organismsDiffer>false</organismsDiffer>
    <experiments>3</experiments>
</comment>
<comment type="interaction">
    <interactant intactId="EBI-748391">
        <id>Q9BWG6</id>
    </interactant>
    <interactant intactId="EBI-8641936">
        <id>Q15742</id>
        <label>NAB2</label>
    </interactant>
    <organismsDiffer>false</organismsDiffer>
    <experiments>3</experiments>
</comment>
<comment type="interaction">
    <interactant intactId="EBI-748391">
        <id>Q9BWG6</id>
    </interactant>
    <interactant intactId="EBI-3911716">
        <id>Q9ULW6</id>
        <label>NAP1L2</label>
    </interactant>
    <organismsDiffer>false</organismsDiffer>
    <experiments>3</experiments>
</comment>
<comment type="interaction">
    <interactant intactId="EBI-748391">
        <id>Q9BWG6</id>
    </interactant>
    <interactant intactId="EBI-1246238">
        <id>P17568</id>
        <label>NDUFB7</label>
    </interactant>
    <organismsDiffer>false</organismsDiffer>
    <experiments>3</experiments>
</comment>
<comment type="interaction">
    <interactant intactId="EBI-748391">
        <id>Q9BWG6</id>
    </interactant>
    <interactant intactId="EBI-10271199">
        <id>Q8NI38</id>
        <label>NFKBID</label>
    </interactant>
    <organismsDiffer>false</organismsDiffer>
    <experiments>3</experiments>
</comment>
<comment type="interaction">
    <interactant intactId="EBI-748391">
        <id>Q9BWG6</id>
    </interactant>
    <interactant intactId="EBI-945833">
        <id>Q7Z3S9</id>
        <label>NOTCH2NLA</label>
    </interactant>
    <organismsDiffer>false</organismsDiffer>
    <experiments>3</experiments>
</comment>
<comment type="interaction">
    <interactant intactId="EBI-748391">
        <id>Q9BWG6</id>
    </interactant>
    <interactant intactId="EBI-22310682">
        <id>P0DPK4</id>
        <label>NOTCH2NLC</label>
    </interactant>
    <organismsDiffer>false</organismsDiffer>
    <experiments>3</experiments>
</comment>
<comment type="interaction">
    <interactant intactId="EBI-748391">
        <id>Q9BWG6</id>
    </interactant>
    <interactant intactId="EBI-10302990">
        <id>Q9BYU1</id>
        <label>PBX4</label>
    </interactant>
    <organismsDiffer>false</organismsDiffer>
    <experiments>3</experiments>
</comment>
<comment type="interaction">
    <interactant intactId="EBI-748391">
        <id>Q9BWG6</id>
    </interactant>
    <interactant intactId="EBI-1105124">
        <id>Q5VU43</id>
        <label>PDE4DIP</label>
    </interactant>
    <organismsDiffer>false</organismsDiffer>
    <experiments>3</experiments>
</comment>
<comment type="interaction">
    <interactant intactId="EBI-748391">
        <id>Q9BWG6</id>
    </interactant>
    <interactant intactId="EBI-9640281">
        <id>Q5VU43-2</id>
        <label>PDE4DIP</label>
    </interactant>
    <organismsDiffer>false</organismsDiffer>
    <experiments>3</experiments>
</comment>
<comment type="interaction">
    <interactant intactId="EBI-748391">
        <id>Q9BWG6</id>
    </interactant>
    <interactant intactId="EBI-350517">
        <id>Q9NR12</id>
        <label>PDLIM7</label>
    </interactant>
    <organismsDiffer>false</organismsDiffer>
    <experiments>3</experiments>
</comment>
<comment type="interaction">
    <interactant intactId="EBI-748391">
        <id>Q9BWG6</id>
    </interactant>
    <interactant intactId="EBI-357275">
        <id>Q99471</id>
        <label>PFDN5</label>
    </interactant>
    <organismsDiffer>false</organismsDiffer>
    <experiments>3</experiments>
</comment>
<comment type="interaction">
    <interactant intactId="EBI-748391">
        <id>Q9BWG6</id>
    </interactant>
    <interactant intactId="EBI-14066006">
        <id>Q4G0R1</id>
        <label>PIBF1</label>
    </interactant>
    <organismsDiffer>false</organismsDiffer>
    <experiments>3</experiments>
</comment>
<comment type="interaction">
    <interactant intactId="EBI-748391">
        <id>Q9BWG6</id>
    </interactant>
    <interactant intactId="EBI-79165">
        <id>Q9NRD5</id>
        <label>PICK1</label>
    </interactant>
    <organismsDiffer>false</organismsDiffer>
    <experiments>3</experiments>
</comment>
<comment type="interaction">
    <interactant intactId="EBI-748391">
        <id>Q9BWG6</id>
    </interactant>
    <interactant intactId="EBI-357318">
        <id>Q9NWS0</id>
        <label>PIH1D1</label>
    </interactant>
    <organismsDiffer>false</organismsDiffer>
    <experiments>3</experiments>
</comment>
<comment type="interaction">
    <interactant intactId="EBI-748391">
        <id>Q9BWG6</id>
    </interactant>
    <interactant intactId="EBI-740019">
        <id>O15162</id>
        <label>PLSCR1</label>
    </interactant>
    <organismsDiffer>false</organismsDiffer>
    <experiments>4</experiments>
</comment>
<comment type="interaction">
    <interactant intactId="EBI-748391">
        <id>Q9BWG6</id>
    </interactant>
    <interactant intactId="EBI-302345">
        <id>Q8ND90</id>
        <label>PNMA1</label>
    </interactant>
    <organismsDiffer>false</organismsDiffer>
    <experiments>8</experiments>
</comment>
<comment type="interaction">
    <interactant intactId="EBI-748391">
        <id>Q9BWG6</id>
    </interactant>
    <interactant intactId="EBI-302355">
        <id>Q9UL42</id>
        <label>PNMA2</label>
    </interactant>
    <organismsDiffer>false</organismsDiffer>
    <experiments>3</experiments>
</comment>
<comment type="interaction">
    <interactant intactId="EBI-748391">
        <id>Q9BWG6</id>
    </interactant>
    <interactant intactId="EBI-710402">
        <id>Q96I34</id>
        <label>PPP1R16A</label>
    </interactant>
    <organismsDiffer>false</organismsDiffer>
    <experiments>3</experiments>
</comment>
<comment type="interaction">
    <interactant intactId="EBI-748391">
        <id>Q9BWG6</id>
    </interactant>
    <interactant intactId="EBI-10293968">
        <id>Q96T49</id>
        <label>PPP1R16B</label>
    </interactant>
    <organismsDiffer>false</organismsDiffer>
    <experiments>3</experiments>
</comment>
<comment type="interaction">
    <interactant intactId="EBI-748391">
        <id>Q9BWG6</id>
    </interactant>
    <interactant intactId="EBI-3957793">
        <id>Q9GZV8</id>
        <label>PRDM14</label>
    </interactant>
    <organismsDiffer>false</organismsDiffer>
    <experiments>5</experiments>
</comment>
<comment type="interaction">
    <interactant intactId="EBI-748391">
        <id>Q9BWG6</id>
    </interactant>
    <interactant intactId="EBI-1567866">
        <id>Q6MZQ0</id>
        <label>PRR5L</label>
    </interactant>
    <organismsDiffer>false</organismsDiffer>
    <experiments>3</experiments>
</comment>
<comment type="interaction">
    <interactant intactId="EBI-748391">
        <id>Q9BWG6</id>
    </interactant>
    <interactant intactId="EBI-1050964">
        <id>O43586</id>
        <label>PSTPIP1</label>
    </interactant>
    <organismsDiffer>false</organismsDiffer>
    <experiments>3</experiments>
</comment>
<comment type="interaction">
    <interactant intactId="EBI-748391">
        <id>Q9BWG6</id>
    </interactant>
    <interactant intactId="EBI-1210429">
        <id>Q9NYW8</id>
        <label>RBAK</label>
    </interactant>
    <organismsDiffer>false</organismsDiffer>
    <experiments>3</experiments>
</comment>
<comment type="interaction">
    <interactant intactId="EBI-748391">
        <id>Q9BWG6</id>
    </interactant>
    <interactant intactId="EBI-741332">
        <id>P57052</id>
        <label>RBM11</label>
    </interactant>
    <organismsDiffer>false</organismsDiffer>
    <experiments>3</experiments>
</comment>
<comment type="interaction">
    <interactant intactId="EBI-748391">
        <id>Q9BWG6</id>
    </interactant>
    <interactant intactId="EBI-473821">
        <id>Q5RL73</id>
        <label>RBM48</label>
    </interactant>
    <organismsDiffer>false</organismsDiffer>
    <experiments>3</experiments>
</comment>
<comment type="interaction">
    <interactant intactId="EBI-748391">
        <id>Q9BWG6</id>
    </interactant>
    <interactant intactId="EBI-10288724">
        <id>Q8NG50</id>
        <label>RDM1</label>
    </interactant>
    <organismsDiffer>false</organismsDiffer>
    <experiments>5</experiments>
</comment>
<comment type="interaction">
    <interactant intactId="EBI-748391">
        <id>Q9BWG6</id>
    </interactant>
    <interactant intactId="EBI-10829018">
        <id>Q04864-2</id>
        <label>REL</label>
    </interactant>
    <organismsDiffer>false</organismsDiffer>
    <experiments>3</experiments>
</comment>
<comment type="interaction">
    <interactant intactId="EBI-748391">
        <id>Q9BWG6</id>
    </interactant>
    <interactant intactId="EBI-1244971">
        <id>Q15669</id>
        <label>RHOH</label>
    </interactant>
    <organismsDiffer>false</organismsDiffer>
    <experiments>3</experiments>
</comment>
<comment type="interaction">
    <interactant intactId="EBI-748391">
        <id>Q9BWG6</id>
    </interactant>
    <interactant intactId="EBI-726876">
        <id>Q6NUQ1</id>
        <label>RINT1</label>
    </interactant>
    <organismsDiffer>false</organismsDiffer>
    <experiments>5</experiments>
</comment>
<comment type="interaction">
    <interactant intactId="EBI-748391">
        <id>Q9BWG6</id>
    </interactant>
    <interactant intactId="EBI-18560266">
        <id>Q92753-1</id>
        <label>RORB</label>
    </interactant>
    <organismsDiffer>false</organismsDiffer>
    <experiments>3</experiments>
</comment>
<comment type="interaction">
    <interactant intactId="EBI-748391">
        <id>Q9BWG6</id>
    </interactant>
    <interactant intactId="EBI-1050213">
        <id>Q96KN7</id>
        <label>RPGRIP1</label>
    </interactant>
    <organismsDiffer>false</organismsDiffer>
    <experiments>3</experiments>
</comment>
<comment type="interaction">
    <interactant intactId="EBI-748391">
        <id>Q9BWG6</id>
    </interactant>
    <interactant intactId="EBI-2855824">
        <id>Q9UNE2</id>
        <label>RPH3AL</label>
    </interactant>
    <organismsDiffer>false</organismsDiffer>
    <experiments>3</experiments>
</comment>
<comment type="interaction">
    <interactant intactId="EBI-748391">
        <id>Q9BWG6</id>
    </interactant>
    <interactant intactId="EBI-358489">
        <id>Q96GM5</id>
        <label>SMARCD1</label>
    </interactant>
    <organismsDiffer>false</organismsDiffer>
    <experiments>3</experiments>
</comment>
<comment type="interaction">
    <interactant intactId="EBI-748391">
        <id>Q9BWG6</id>
    </interactant>
    <interactant intactId="EBI-741237">
        <id>O60504</id>
        <label>SORBS3</label>
    </interactant>
    <organismsDiffer>false</organismsDiffer>
    <experiments>3</experiments>
</comment>
<comment type="interaction">
    <interactant intactId="EBI-748391">
        <id>Q9BWG6</id>
    </interactant>
    <interactant intactId="EBI-5235340">
        <id>Q7Z699</id>
        <label>SPRED1</label>
    </interactant>
    <organismsDiffer>false</organismsDiffer>
    <experiments>3</experiments>
</comment>
<comment type="interaction">
    <interactant intactId="EBI-748391">
        <id>Q9BWG6</id>
    </interactant>
    <interactant intactId="EBI-2212028">
        <id>Q9Y2D8</id>
        <label>SSX2IP</label>
    </interactant>
    <organismsDiffer>false</organismsDiffer>
    <experiments>3</experiments>
</comment>
<comment type="interaction">
    <interactant intactId="EBI-748391">
        <id>Q9BWG6</id>
    </interactant>
    <interactant intactId="EBI-714135">
        <id>O75558</id>
        <label>STX11</label>
    </interactant>
    <organismsDiffer>false</organismsDiffer>
    <experiments>5</experiments>
</comment>
<comment type="interaction">
    <interactant intactId="EBI-748391">
        <id>Q9BWG6</id>
    </interactant>
    <interactant intactId="EBI-8484990">
        <id>Q8N4C7</id>
        <label>STX19</label>
    </interactant>
    <organismsDiffer>false</organismsDiffer>
    <experiments>3</experiments>
</comment>
<comment type="interaction">
    <interactant intactId="EBI-748391">
        <id>Q9BWG6</id>
    </interactant>
    <interactant intactId="EBI-6872807">
        <id>Q8N0S2</id>
        <label>SYCE1</label>
    </interactant>
    <organismsDiffer>false</organismsDiffer>
    <experiments>3</experiments>
</comment>
<comment type="interaction">
    <interactant intactId="EBI-748391">
        <id>Q9BWG6</id>
    </interactant>
    <interactant intactId="EBI-529518">
        <id>Q86VP1</id>
        <label>TAX1BP1</label>
    </interactant>
    <organismsDiffer>false</organismsDiffer>
    <experiments>3</experiments>
</comment>
<comment type="interaction">
    <interactant intactId="EBI-748391">
        <id>Q9BWG6</id>
    </interactant>
    <interactant intactId="EBI-1105213">
        <id>Q9UBB9</id>
        <label>TFIP11</label>
    </interactant>
    <organismsDiffer>false</organismsDiffer>
    <experiments>5</experiments>
</comment>
<comment type="interaction">
    <interactant intactId="EBI-748391">
        <id>Q9BWG6</id>
    </interactant>
    <interactant intactId="EBI-717810">
        <id>Q08117</id>
        <label>TLE5</label>
    </interactant>
    <organismsDiffer>false</organismsDiffer>
    <experiments>3</experiments>
</comment>
<comment type="interaction">
    <interactant intactId="EBI-748391">
        <id>Q9BWG6</id>
    </interactant>
    <interactant intactId="EBI-11741437">
        <id>Q08117-2</id>
        <label>TLE5</label>
    </interactant>
    <organismsDiffer>false</organismsDiffer>
    <experiments>5</experiments>
</comment>
<comment type="interaction">
    <interactant intactId="EBI-748391">
        <id>Q9BWG6</id>
    </interactant>
    <interactant intactId="EBI-746692">
        <id>P19237</id>
        <label>TNNI1</label>
    </interactant>
    <organismsDiffer>false</organismsDiffer>
    <experiments>3</experiments>
</comment>
<comment type="interaction">
    <interactant intactId="EBI-748391">
        <id>Q9BWG6</id>
    </interactant>
    <interactant intactId="EBI-11952721">
        <id>Q05BL1</id>
        <label>TP53BP2</label>
    </interactant>
    <organismsDiffer>false</organismsDiffer>
    <experiments>3</experiments>
</comment>
<comment type="interaction">
    <interactant intactId="EBI-748391">
        <id>Q9BWG6</id>
    </interactant>
    <interactant intactId="EBI-359224">
        <id>Q13077</id>
        <label>TRAF1</label>
    </interactant>
    <organismsDiffer>false</organismsDiffer>
    <experiments>8</experiments>
</comment>
<comment type="interaction">
    <interactant intactId="EBI-748391">
        <id>Q9BWG6</id>
    </interactant>
    <interactant intactId="EBI-355744">
        <id>Q12933</id>
        <label>TRAF2</label>
    </interactant>
    <organismsDiffer>false</organismsDiffer>
    <experiments>3</experiments>
</comment>
<comment type="interaction">
    <interactant intactId="EBI-748391">
        <id>Q9BWG6</id>
    </interactant>
    <interactant intactId="EBI-492476">
        <id>Q96RU7</id>
        <label>TRIB3</label>
    </interactant>
    <organismsDiffer>false</organismsDiffer>
    <experiments>3</experiments>
</comment>
<comment type="interaction">
    <interactant intactId="EBI-748391">
        <id>Q9BWG6</id>
    </interactant>
    <interactant intactId="EBI-11981577">
        <id>Q9UDY6-2</id>
        <label>TRIM10</label>
    </interactant>
    <organismsDiffer>false</organismsDiffer>
    <experiments>3</experiments>
</comment>
<comment type="interaction">
    <interactant intactId="EBI-748391">
        <id>Q9BWG6</id>
    </interactant>
    <interactant intactId="EBI-740098">
        <id>P36406</id>
        <label>TRIM23</label>
    </interactant>
    <organismsDiffer>false</organismsDiffer>
    <experiments>3</experiments>
</comment>
<comment type="interaction">
    <interactant intactId="EBI-748391">
        <id>Q9BWG6</id>
    </interactant>
    <interactant intactId="EBI-719493">
        <id>P14373</id>
        <label>TRIM27</label>
    </interactant>
    <organismsDiffer>false</organismsDiffer>
    <experiments>6</experiments>
</comment>
<comment type="interaction">
    <interactant intactId="EBI-748391">
        <id>Q9BWG6</id>
    </interactant>
    <interactant intactId="EBI-741602">
        <id>O94972</id>
        <label>TRIM37</label>
    </interactant>
    <organismsDiffer>false</organismsDiffer>
    <experiments>3</experiments>
</comment>
<comment type="interaction">
    <interactant intactId="EBI-748391">
        <id>Q9BWG6</id>
    </interactant>
    <interactant intactId="EBI-5235829">
        <id>Q8IWZ5</id>
        <label>TRIM42</label>
    </interactant>
    <organismsDiffer>false</organismsDiffer>
    <experiments>3</experiments>
</comment>
<comment type="interaction">
    <interactant intactId="EBI-748391">
        <id>Q9BWG6</id>
    </interactant>
    <interactant intactId="EBI-2130429">
        <id>Q9BYV2</id>
        <label>TRIM54</label>
    </interactant>
    <organismsDiffer>false</organismsDiffer>
    <experiments>6</experiments>
</comment>
<comment type="interaction">
    <interactant intactId="EBI-748391">
        <id>Q9BWG6</id>
    </interactant>
    <interactant intactId="EBI-8656864">
        <id>Q6PF05</id>
        <label>TTC23L</label>
    </interactant>
    <organismsDiffer>false</organismsDiffer>
    <experiments>3</experiments>
</comment>
<comment type="interaction">
    <interactant intactId="EBI-748391">
        <id>Q9BWG6</id>
    </interactant>
    <interactant intactId="EBI-746004">
        <id>Q5T124</id>
        <label>UBXN11</label>
    </interactant>
    <organismsDiffer>false</organismsDiffer>
    <experiments>4</experiments>
</comment>
<comment type="interaction">
    <interactant intactId="EBI-748391">
        <id>Q9BWG6</id>
    </interactant>
    <interactant intactId="EBI-8601749">
        <id>Q495M9</id>
        <label>USH1G</label>
    </interactant>
    <organismsDiffer>false</organismsDiffer>
    <experiments>3</experiments>
</comment>
<comment type="interaction">
    <interactant intactId="EBI-748391">
        <id>Q9BWG6</id>
    </interactant>
    <interactant intactId="EBI-739895">
        <id>Q8N6Y0</id>
        <label>USHBP1</label>
    </interactant>
    <organismsDiffer>false</organismsDiffer>
    <experiments>3</experiments>
</comment>
<comment type="interaction">
    <interactant intactId="EBI-748391">
        <id>Q9BWG6</id>
    </interactant>
    <interactant intactId="EBI-353844">
        <id>P08670</id>
        <label>VIM</label>
    </interactant>
    <organismsDiffer>false</organismsDiffer>
    <experiments>3</experiments>
</comment>
<comment type="interaction">
    <interactant intactId="EBI-748391">
        <id>Q9BWG6</id>
    </interactant>
    <interactant intactId="EBI-2803134">
        <id>Q2NL98</id>
        <label>VMAC</label>
    </interactant>
    <organismsDiffer>false</organismsDiffer>
    <experiments>3</experiments>
</comment>
<comment type="interaction">
    <interactant intactId="EBI-748391">
        <id>Q9BWG6</id>
    </interactant>
    <interactant intactId="EBI-2799833">
        <id>Q8N1B4</id>
        <label>VPS52</label>
    </interactant>
    <organismsDiffer>false</organismsDiffer>
    <experiments>3</experiments>
</comment>
<comment type="interaction">
    <interactant intactId="EBI-748391">
        <id>Q9BWG6</id>
    </interactant>
    <interactant intactId="EBI-11957238">
        <id>Q2TAL6</id>
        <label>VWC2</label>
    </interactant>
    <organismsDiffer>false</organismsDiffer>
    <experiments>3</experiments>
</comment>
<comment type="interaction">
    <interactant intactId="EBI-748391">
        <id>Q9BWG6</id>
    </interactant>
    <interactant intactId="EBI-2682961">
        <id>Q9Y2K1</id>
        <label>ZBTB1</label>
    </interactant>
    <organismsDiffer>false</organismsDiffer>
    <experiments>3</experiments>
</comment>
<comment type="interaction">
    <interactant intactId="EBI-748391">
        <id>Q9BWG6</id>
    </interactant>
    <interactant intactId="EBI-10176632">
        <id>O43829</id>
        <label>ZBTB14</label>
    </interactant>
    <organismsDiffer>false</organismsDiffer>
    <experiments>3</experiments>
</comment>
<comment type="interaction">
    <interactant intactId="EBI-748391">
        <id>Q9BWG6</id>
    </interactant>
    <interactant intactId="EBI-10183064">
        <id>Q8N5A5-2</id>
        <label>ZGPAT</label>
    </interactant>
    <organismsDiffer>false</organismsDiffer>
    <experiments>3</experiments>
</comment>
<comment type="interaction">
    <interactant intactId="EBI-748391">
        <id>Q9BWG6</id>
    </interactant>
    <interactant intactId="EBI-11962760">
        <id>Q9NZV7</id>
        <label>ZIM2</label>
    </interactant>
    <organismsDiffer>false</organismsDiffer>
    <experiments>3</experiments>
</comment>
<comment type="interaction">
    <interactant intactId="EBI-748391">
        <id>Q9BWG6</id>
    </interactant>
    <interactant intactId="EBI-12030590">
        <id>Q9H0C1</id>
        <label>ZMYND12</label>
    </interactant>
    <organismsDiffer>false</organismsDiffer>
    <experiments>3</experiments>
</comment>
<comment type="interaction">
    <interactant intactId="EBI-748391">
        <id>Q9BWG6</id>
    </interactant>
    <interactant intactId="EBI-7101455">
        <id>P52742</id>
        <label>ZNF135</label>
    </interactant>
    <organismsDiffer>false</organismsDiffer>
    <experiments>3</experiments>
</comment>
<comment type="interaction">
    <interactant intactId="EBI-748391">
        <id>Q9BWG6</id>
    </interactant>
    <interactant intactId="EBI-12884200">
        <id>P17023</id>
        <label>ZNF19</label>
    </interactant>
    <organismsDiffer>false</organismsDiffer>
    <experiments>3</experiments>
</comment>
<comment type="interaction">
    <interactant intactId="EBI-748391">
        <id>Q9BWG6</id>
    </interactant>
    <interactant intactId="EBI-717634">
        <id>P17024</id>
        <label>ZNF20</label>
    </interactant>
    <organismsDiffer>false</organismsDiffer>
    <experiments>3</experiments>
</comment>
<comment type="interaction">
    <interactant intactId="EBI-748391">
        <id>Q9BWG6</id>
    </interactant>
    <interactant intactId="EBI-751960">
        <id>O95125</id>
        <label>ZNF202</label>
    </interactant>
    <organismsDiffer>false</organismsDiffer>
    <experiments>3</experiments>
</comment>
<comment type="interaction">
    <interactant intactId="EBI-748391">
        <id>Q9BWG6</id>
    </interactant>
    <interactant intactId="EBI-11962468">
        <id>Q7Z4V0</id>
        <label>ZNF438</label>
    </interactant>
    <organismsDiffer>false</organismsDiffer>
    <experiments>3</experiments>
</comment>
<comment type="interaction">
    <interactant intactId="EBI-748391">
        <id>Q9BWG6</id>
    </interactant>
    <interactant intactId="EBI-10269136">
        <id>Q8NB15</id>
        <label>ZNF511</label>
    </interactant>
    <organismsDiffer>false</organismsDiffer>
    <experiments>3</experiments>
</comment>
<comment type="interaction">
    <interactant intactId="EBI-748391">
        <id>Q9BWG6</id>
    </interactant>
    <interactant intactId="EBI-11035148">
        <id>Q8TF50</id>
        <label>ZNF526</label>
    </interactant>
    <organismsDiffer>false</organismsDiffer>
    <experiments>3</experiments>
</comment>
<comment type="interaction">
    <interactant intactId="EBI-748391">
        <id>Q9BWG6</id>
    </interactant>
    <interactant intactId="EBI-12895421">
        <id>Q8IVP9</id>
        <label>ZNF547</label>
    </interactant>
    <organismsDiffer>false</organismsDiffer>
    <experiments>3</experiments>
</comment>
<comment type="interaction">
    <interactant intactId="EBI-748391">
        <id>Q9BWG6</id>
    </interactant>
    <interactant intactId="EBI-2555731">
        <id>Q9H707</id>
        <label>ZNF552</label>
    </interactant>
    <organismsDiffer>false</organismsDiffer>
    <experiments>3</experiments>
</comment>
<comment type="interaction">
    <interactant intactId="EBI-748391">
        <id>Q9BWG6</id>
    </interactant>
    <interactant intactId="EBI-12939666">
        <id>Q96N77-2</id>
        <label>ZNF641</label>
    </interactant>
    <organismsDiffer>false</organismsDiffer>
    <experiments>3</experiments>
</comment>
<comment type="interaction">
    <interactant intactId="EBI-748391">
        <id>Q9BWG6</id>
    </interactant>
    <interactant intactId="EBI-4395732">
        <id>P0C7X2</id>
        <label>ZNF688</label>
    </interactant>
    <organismsDiffer>false</organismsDiffer>
    <experiments>3</experiments>
</comment>
<comment type="interaction">
    <interactant intactId="EBI-748391">
        <id>Q9BWG6</id>
    </interactant>
    <interactant intactId="EBI-7254550">
        <id>P36508</id>
        <label>ZNF76</label>
    </interactant>
    <organismsDiffer>false</organismsDiffer>
    <experiments>3</experiments>
</comment>
<comment type="interaction">
    <interactant intactId="EBI-748391">
        <id>Q9BWG6</id>
    </interactant>
    <interactant intactId="EBI-10251462">
        <id>Q6NX45</id>
        <label>ZNF774</label>
    </interactant>
    <organismsDiffer>false</organismsDiffer>
    <experiments>3</experiments>
</comment>
<comment type="interaction">
    <interactant intactId="EBI-748391">
        <id>Q9BWG6</id>
    </interactant>
    <interactant intactId="EBI-18036029">
        <id>Q3KNS6-3</id>
        <label>ZNF829</label>
    </interactant>
    <organismsDiffer>false</organismsDiffer>
    <experiments>3</experiments>
</comment>
<comment type="subcellular location">
    <subcellularLocation>
        <location evidence="5">Nucleus</location>
        <location evidence="5">Nucleoplasm</location>
    </subcellularLocation>
    <subcellularLocation>
        <location evidence="5">Nucleus speckle</location>
    </subcellularLocation>
    <text evidence="2">Colocalizes with LUC7L2 and SNRNP70 in nuclear speckles.</text>
</comment>
<comment type="alternative products">
    <event type="alternative splicing"/>
    <isoform>
        <id>Q9BWG6-1</id>
        <name>1</name>
        <sequence type="displayed"/>
    </isoform>
    <isoform>
        <id>Q9BWG6-2</id>
        <name>2</name>
        <sequence type="described" ref="VSP_021489"/>
    </isoform>
    <isoform>
        <id>Q9BWG6-3</id>
        <name>3</name>
        <sequence type="described" ref="VSP_053982 VSP_053983"/>
    </isoform>
</comment>
<comment type="disease">
    <disease id="DI-06536">
        <name>Orofaciodigital syndrome 19</name>
        <acronym>OFD19</acronym>
        <description>A form of orofaciodigital syndrome, a group of heterogeneous disorders characterized by malformations of the oral cavity, face and digits, and associated phenotypic abnormalities that lead to the delineation of various subtypes. OFD19 is an autosomal recessive form characterized by tongue nodules, dental and digital anomalies, narrow high-arched or cleft palate, and retrognathia. Some patients have notching of the upper or lower lip.</description>
        <dbReference type="MIM" id="620107"/>
    </disease>
    <text evidence="7">The disease is caused by variants affecting the gene represented in this entry. The genetic variation producing the missense variant p.P51Q, associated with OFD19, has been shown to create a new acceptor splice site, leading to the deletion of 31 nucleotides, resulting in a frameshift and an early termination codon (p.F42YfsTer8). The variant mRNA is predicted to undergo nonsense-mediated mRNA decay.</text>
</comment>